<feature type="chain" id="PRO_0000047102" description="BCL11 transcription factor A">
    <location>
        <begin position="1"/>
        <end position="835"/>
    </location>
</feature>
<feature type="zinc finger region" description="C2HC-type" evidence="15 27">
    <location>
        <begin position="45"/>
        <end position="71"/>
    </location>
</feature>
<feature type="zinc finger region" description="C2H2-type 1" evidence="3">
    <location>
        <begin position="170"/>
        <end position="193"/>
    </location>
</feature>
<feature type="zinc finger region" description="C2H2-type 2" evidence="3">
    <location>
        <begin position="377"/>
        <end position="399"/>
    </location>
</feature>
<feature type="zinc finger region" description="C2H2-type 3" evidence="3">
    <location>
        <begin position="405"/>
        <end position="429"/>
    </location>
</feature>
<feature type="zinc finger region" description="C2H2-type 4" evidence="14 24 26">
    <location>
        <begin position="742"/>
        <end position="764"/>
    </location>
</feature>
<feature type="zinc finger region" description="C2H2-type 5" evidence="14 24 26">
    <location>
        <begin position="770"/>
        <end position="792"/>
    </location>
</feature>
<feature type="zinc finger region" description="C2H2-type 6" evidence="14 24 26">
    <location>
        <begin position="800"/>
        <end position="823"/>
    </location>
</feature>
<feature type="region of interest" description="Required for nuclear body formation and for SUMO1 recruitment" evidence="1">
    <location>
        <begin position="1"/>
        <end position="210"/>
    </location>
</feature>
<feature type="region of interest" description="Disordered" evidence="4">
    <location>
        <begin position="1"/>
        <end position="41"/>
    </location>
</feature>
<feature type="region of interest" description="Disordered" evidence="4">
    <location>
        <begin position="323"/>
        <end position="376"/>
    </location>
</feature>
<feature type="region of interest" description="Disordered" evidence="4">
    <location>
        <begin position="421"/>
        <end position="458"/>
    </location>
</feature>
<feature type="region of interest" description="Disordered" evidence="4">
    <location>
        <begin position="471"/>
        <end position="512"/>
    </location>
</feature>
<feature type="region of interest" description="Disordered" evidence="4">
    <location>
        <begin position="572"/>
        <end position="619"/>
    </location>
</feature>
<feature type="region of interest" description="Disordered" evidence="4">
    <location>
        <begin position="678"/>
        <end position="740"/>
    </location>
</feature>
<feature type="region of interest" description="DNA-binding" evidence="14 24 26">
    <location>
        <begin position="737"/>
        <end position="835"/>
    </location>
</feature>
<feature type="region of interest" description="Disordered" evidence="14">
    <location>
        <begin position="765"/>
        <end position="769"/>
    </location>
</feature>
<feature type="region of interest" description="Disordered" evidence="14">
    <location>
        <begin position="793"/>
        <end position="799"/>
    </location>
</feature>
<feature type="compositionally biased region" description="Basic residues" evidence="4">
    <location>
        <begin position="1"/>
        <end position="12"/>
    </location>
</feature>
<feature type="compositionally biased region" description="Pro residues" evidence="4">
    <location>
        <begin position="355"/>
        <end position="372"/>
    </location>
</feature>
<feature type="compositionally biased region" description="Basic residues" evidence="4">
    <location>
        <begin position="421"/>
        <end position="430"/>
    </location>
</feature>
<feature type="compositionally biased region" description="Polar residues" evidence="4">
    <location>
        <begin position="441"/>
        <end position="450"/>
    </location>
</feature>
<feature type="compositionally biased region" description="Acidic residues" evidence="4">
    <location>
        <begin position="482"/>
        <end position="506"/>
    </location>
</feature>
<feature type="compositionally biased region" description="Basic and acidic residues" evidence="4">
    <location>
        <begin position="574"/>
        <end position="584"/>
    </location>
</feature>
<feature type="compositionally biased region" description="Low complexity" evidence="4">
    <location>
        <begin position="682"/>
        <end position="696"/>
    </location>
</feature>
<feature type="compositionally biased region" description="Gly residues" evidence="4">
    <location>
        <begin position="706"/>
        <end position="720"/>
    </location>
</feature>
<feature type="binding site" evidence="15 27">
    <location>
        <position position="48"/>
    </location>
    <ligand>
        <name>Zn(2+)</name>
        <dbReference type="ChEBI" id="CHEBI:29105"/>
        <label>1</label>
    </ligand>
</feature>
<feature type="binding site" evidence="15 27">
    <location>
        <position position="51"/>
    </location>
    <ligand>
        <name>Zn(2+)</name>
        <dbReference type="ChEBI" id="CHEBI:29105"/>
        <label>1</label>
    </ligand>
</feature>
<feature type="binding site" evidence="15 27">
    <location>
        <position position="66"/>
    </location>
    <ligand>
        <name>Zn(2+)</name>
        <dbReference type="ChEBI" id="CHEBI:29105"/>
        <label>1</label>
    </ligand>
</feature>
<feature type="binding site" evidence="15 27">
    <location>
        <position position="71"/>
    </location>
    <ligand>
        <name>Zn(2+)</name>
        <dbReference type="ChEBI" id="CHEBI:29105"/>
        <label>1</label>
    </ligand>
</feature>
<feature type="binding site" evidence="14 24 26">
    <location>
        <position position="744"/>
    </location>
    <ligand>
        <name>Zn(2+)</name>
        <dbReference type="ChEBI" id="CHEBI:29105"/>
        <label>2</label>
    </ligand>
</feature>
<feature type="binding site" evidence="14 24 26">
    <location>
        <position position="747"/>
    </location>
    <ligand>
        <name>Zn(2+)</name>
        <dbReference type="ChEBI" id="CHEBI:29105"/>
        <label>2</label>
    </ligand>
</feature>
<feature type="binding site" evidence="14 24 26">
    <location>
        <position position="760"/>
    </location>
    <ligand>
        <name>Zn(2+)</name>
        <dbReference type="ChEBI" id="CHEBI:29105"/>
        <label>2</label>
    </ligand>
</feature>
<feature type="binding site" evidence="14 24 26">
    <location>
        <position position="764"/>
    </location>
    <ligand>
        <name>Zn(2+)</name>
        <dbReference type="ChEBI" id="CHEBI:29105"/>
        <label>2</label>
    </ligand>
</feature>
<feature type="binding site" evidence="14 24 26">
    <location>
        <position position="772"/>
    </location>
    <ligand>
        <name>Zn(2+)</name>
        <dbReference type="ChEBI" id="CHEBI:29105"/>
        <label>3</label>
    </ligand>
</feature>
<feature type="binding site" evidence="14 24 26">
    <location>
        <position position="775"/>
    </location>
    <ligand>
        <name>Zn(2+)</name>
        <dbReference type="ChEBI" id="CHEBI:29105"/>
        <label>3</label>
    </ligand>
</feature>
<feature type="binding site" evidence="14 24 26">
    <location>
        <position position="788"/>
    </location>
    <ligand>
        <name>Zn(2+)</name>
        <dbReference type="ChEBI" id="CHEBI:29105"/>
        <label>3</label>
    </ligand>
</feature>
<feature type="binding site" evidence="14 24 26">
    <location>
        <position position="792"/>
    </location>
    <ligand>
        <name>Zn(2+)</name>
        <dbReference type="ChEBI" id="CHEBI:29105"/>
        <label>3</label>
    </ligand>
</feature>
<feature type="binding site" evidence="14 24 26">
    <location>
        <position position="802"/>
    </location>
    <ligand>
        <name>Zn(2+)</name>
        <dbReference type="ChEBI" id="CHEBI:29105"/>
        <label>4</label>
    </ligand>
</feature>
<feature type="binding site" evidence="14 24 26">
    <location>
        <position position="805"/>
    </location>
    <ligand>
        <name>Zn(2+)</name>
        <dbReference type="ChEBI" id="CHEBI:29105"/>
        <label>4</label>
    </ligand>
</feature>
<feature type="binding site" evidence="14 24 26">
    <location>
        <position position="818"/>
    </location>
    <ligand>
        <name>Zn(2+)</name>
        <dbReference type="ChEBI" id="CHEBI:29105"/>
        <label>4</label>
    </ligand>
</feature>
<feature type="binding site" evidence="14 24 26">
    <location>
        <position position="823"/>
    </location>
    <ligand>
        <name>Zn(2+)</name>
        <dbReference type="ChEBI" id="CHEBI:29105"/>
        <label>4</label>
    </ligand>
</feature>
<feature type="modified residue" description="Phosphoserine" evidence="2">
    <location>
        <position position="86"/>
    </location>
</feature>
<feature type="modified residue" description="Phosphoserine" evidence="28">
    <location>
        <position position="205"/>
    </location>
</feature>
<feature type="modified residue" description="Asymmetric dimethylarginine" evidence="2">
    <location>
        <position position="271"/>
    </location>
</feature>
<feature type="modified residue" description="Phosphoserine" evidence="29">
    <location>
        <position position="332"/>
    </location>
</feature>
<feature type="modified residue" description="Phosphoserine" evidence="2">
    <location>
        <position position="337"/>
    </location>
</feature>
<feature type="modified residue" description="Phosphoserine" evidence="2">
    <location>
        <position position="446"/>
    </location>
</feature>
<feature type="modified residue" description="Phosphoserine" evidence="2">
    <location>
        <position position="447"/>
    </location>
</feature>
<feature type="modified residue" description="Phosphoserine" evidence="28">
    <location>
        <position position="608"/>
    </location>
</feature>
<feature type="modified residue" description="Phosphoserine" evidence="29">
    <location>
        <position position="625"/>
    </location>
</feature>
<feature type="modified residue" description="Phosphoserine" evidence="29">
    <location>
        <position position="630"/>
    </location>
</feature>
<feature type="modified residue" description="Phosphothreonine" evidence="29">
    <location>
        <position position="701"/>
    </location>
</feature>
<feature type="cross-link" description="Glycyl lysine isopeptide (Lys-Gly) (interchain with G-Cter in SUMO2)" evidence="30 31">
    <location>
        <position position="123"/>
    </location>
</feature>
<feature type="cross-link" description="Glycyl lysine isopeptide (Lys-Gly) (interchain with G-Cter in SUMO2)" evidence="31">
    <location>
        <position position="164"/>
    </location>
</feature>
<feature type="cross-link" description="Glycyl lysine isopeptide (Lys-Gly) (interchain with G-Cter in SUMO2)" evidence="31">
    <location>
        <position position="620"/>
    </location>
</feature>
<feature type="cross-link" description="Glycyl lysine isopeptide (Lys-Gly) (interchain with G-Cter in SUMO1)" evidence="2">
    <location>
        <position position="634"/>
    </location>
</feature>
<feature type="cross-link" description="Glycyl lysine isopeptide (Lys-Gly) (interchain with G-Cter in SUMO2)" evidence="30 31">
    <location>
        <position position="833"/>
    </location>
</feature>
<feature type="splice variant" id="VSP_009548" description="In isoform 6." evidence="21">
    <original>DKLLHWRGLSSPRSAHGALIPTPGMSAEYAPQGIC</original>
    <variation>G</variation>
    <location>
        <begin position="129"/>
        <end position="163"/>
    </location>
</feature>
<feature type="splice variant" id="VSP_058656" description="In isoform 7.">
    <original>DKLLHWRGLSSPRS</original>
    <variation>AQTELEDVFVYLMV</variation>
    <location>
        <begin position="129"/>
        <end position="142"/>
    </location>
</feature>
<feature type="splice variant" id="VSP_058657" description="In isoform 7.">
    <location>
        <begin position="143"/>
        <end position="835"/>
    </location>
</feature>
<feature type="splice variant" id="VSP_009550" description="In isoform 3." evidence="17">
    <original>GIPSGLGAECPSQPPLHGIHIADNNPFNLLRI</original>
    <variation>LHTPPFGVVPRELKMCGSFRMEAREPLSSEKI</variation>
    <location>
        <begin position="212"/>
        <end position="243"/>
    </location>
</feature>
<feature type="splice variant" id="VSP_009552" description="In isoform 3." evidence="17">
    <location>
        <begin position="244"/>
        <end position="835"/>
    </location>
</feature>
<feature type="splice variant" id="VSP_009554" description="In isoform 2." evidence="16 17 18">
    <original>EYCGKVFKNCSNLTVHRRSHTGERPYKCE</original>
    <variation>SSHTPIRRSTQRAQDVWQFSDGSSRALKF</variation>
    <location>
        <begin position="745"/>
        <end position="773"/>
    </location>
</feature>
<feature type="splice variant" id="VSP_009555" description="In isoform 2." evidence="16 17 18">
    <location>
        <begin position="774"/>
        <end position="835"/>
    </location>
</feature>
<feature type="sequence variant" id="VAR_076921" description="In IDPFH; de novo mutation; loss of function in transactivation of transcription; reduces the interaction between isoform 2 and isoform 3; disrupts the nuclear paraspeckle distribution of isoform 2 and isoform 3; does not affect the interaction of isoform 2 with TBR1; dbSNP:rs886037864." evidence="11 13">
    <original>T</original>
    <variation>P</variation>
    <location>
        <position position="47"/>
    </location>
</feature>
<feature type="sequence variant" id="VAR_076922" description="In IDPFH; de novo mutation; loss of function in transactivation of transcription; reduces the interaction between isoform 2 and isoform 3; disrupts the nuclear paraspeckle distribution of isoform 2 and isoform 3; does not affect the interaction of isoform 2 with TBR1; dbSNP:rs886037865." evidence="11 13">
    <original>C</original>
    <variation>F</variation>
    <location>
        <position position="48"/>
    </location>
</feature>
<feature type="sequence variant" id="VAR_076923" description="In IDPFH; de novo mutation; loss of function in transactivation of transcription; reduces the interaction between isoform 2 and isoform 3; disrupts the nuclear paraspeckle distribution of isoform 2 and isoform 3; does not affect the interaction of isoform 2 with TBR1; dbSNP:rs886037866." evidence="11 13">
    <original>H</original>
    <variation>Q</variation>
    <location>
        <position position="66"/>
    </location>
</feature>
<feature type="sequence variant" id="VAR_035553" description="In a breast cancer sample; somatic mutation." evidence="8">
    <original>S</original>
    <variation>F</variation>
    <location>
        <position position="142"/>
    </location>
</feature>
<feature type="mutagenesis site" description="Abolishes self-association; when associated with A-57, A-60, A-61 and A-63." evidence="15">
    <original>L</original>
    <variation>A</variation>
    <location>
        <position position="46"/>
    </location>
</feature>
<feature type="mutagenesis site" description="Abolishes self-association; when associated with A-46, A-60, A-61 and A-63." evidence="15">
    <original>L</original>
    <variation>A</variation>
    <location>
        <position position="57"/>
    </location>
</feature>
<feature type="mutagenesis site" description="Impairs self-association. Abolishes self-association; when associated with A-46, A-57, A-61 and A-63. Reduces expression in erythroid cells; when associated with A-61." evidence="15">
    <original>I</original>
    <variation>A</variation>
    <location>
        <position position="60"/>
    </location>
</feature>
<feature type="mutagenesis site" description="Abolishes self-association; when associated with A-46, A-57, A-60 and A-63. Reduces expression in erythroid cells; when associated with A-60." evidence="15">
    <original>L</original>
    <variation>A</variation>
    <location>
        <position position="61"/>
    </location>
</feature>
<feature type="mutagenesis site" description="Impairs self-association. Abolishes self-association; when associated with A-46, A-57, A-60 and A-61." evidence="15">
    <original>F</original>
    <variation>A</variation>
    <location>
        <position position="63"/>
    </location>
</feature>
<feature type="sequence conflict" description="In Ref. 1; CAC17723/CAC17724/CAC17725." evidence="22" ref="1">
    <original>G</original>
    <variation>R</variation>
    <location>
        <position position="119"/>
    </location>
</feature>
<feature type="sequence conflict" description="In Ref. 7; AAG49025." evidence="22" ref="7">
    <original>S</original>
    <variation>F</variation>
    <location>
        <position position="316"/>
    </location>
</feature>
<feature type="sequence conflict" description="In Ref. 7; AAG49025." evidence="22" ref="7">
    <original>F</original>
    <variation>L</variation>
    <location>
        <position position="386"/>
    </location>
</feature>
<feature type="sequence conflict" description="In Ref. 7; AAG49025." evidence="22" ref="7">
    <location>
        <begin position="522"/>
        <end position="532"/>
    </location>
</feature>
<feature type="sequence conflict" description="In Ref. 1; CAC17723/CAC17724." evidence="22" ref="1">
    <original>A</original>
    <variation>T</variation>
    <location>
        <position position="648"/>
    </location>
</feature>
<feature type="sequence conflict" description="In Ref. 7; AAG49025." evidence="22" ref="7">
    <original>E</original>
    <variation>D</variation>
    <location>
        <position position="653"/>
    </location>
</feature>
<feature type="sequence conflict" description="In Ref. 1; CAC17723/CAC17724." evidence="22" ref="1">
    <original>P</original>
    <variation>T</variation>
    <location>
        <position position="730"/>
    </location>
</feature>
<feature type="turn" evidence="35">
    <location>
        <begin position="49"/>
        <end position="52"/>
    </location>
</feature>
<feature type="helix" evidence="35">
    <location>
        <begin position="60"/>
        <end position="69"/>
    </location>
</feature>
<feature type="helix" evidence="33">
    <location>
        <begin position="739"/>
        <end position="742"/>
    </location>
</feature>
<feature type="turn" evidence="33">
    <location>
        <begin position="745"/>
        <end position="747"/>
    </location>
</feature>
<feature type="strand" evidence="32">
    <location>
        <begin position="750"/>
        <end position="753"/>
    </location>
</feature>
<feature type="helix" evidence="33">
    <location>
        <begin position="754"/>
        <end position="765"/>
    </location>
</feature>
<feature type="strand" evidence="33">
    <location>
        <begin position="773"/>
        <end position="776"/>
    </location>
</feature>
<feature type="strand" evidence="33">
    <location>
        <begin position="778"/>
        <end position="781"/>
    </location>
</feature>
<feature type="helix" evidence="33">
    <location>
        <begin position="782"/>
        <end position="789"/>
    </location>
</feature>
<feature type="helix" evidence="33">
    <location>
        <begin position="790"/>
        <end position="792"/>
    </location>
</feature>
<feature type="strand" evidence="33">
    <location>
        <begin position="795"/>
        <end position="797"/>
    </location>
</feature>
<feature type="turn" evidence="33">
    <location>
        <begin position="803"/>
        <end position="805"/>
    </location>
</feature>
<feature type="strand" evidence="33">
    <location>
        <begin position="808"/>
        <end position="811"/>
    </location>
</feature>
<feature type="helix" evidence="33">
    <location>
        <begin position="812"/>
        <end position="822"/>
    </location>
</feature>
<feature type="turn" evidence="34">
    <location>
        <begin position="823"/>
        <end position="826"/>
    </location>
</feature>
<feature type="sequence variant" id="VAR_082936" description="In IDPFH, de novo mutation, loss of function in transactivation of transcription, reduces the interaction between isoform 2 and isoform 3, disrupts the nuclear paraspeckle distribution of isoform 2 and isoform 3; dbSNP:rs886037864." evidence="22">
    <original>T</original>
    <variation>P</variation>
    <location sequence="Q9H165-2">
        <position position="47"/>
    </location>
</feature>
<feature type="sequence variant" id="VAR_082937" description="In IDPFH, de novo mutation, loss of function in transactivation of transcription, reduces the interaction between isoform 2 and isoform 3, disrupts the nuclear paraspeckle distribution of isoform 2 and isoform 3; dbSNP:rs886037865." evidence="22">
    <original>C</original>
    <variation>F</variation>
    <location sequence="Q9H165-2">
        <position position="48"/>
    </location>
</feature>
<feature type="sequence variant" id="VAR_082938" description="In IDPFH, de novo mutation, loss of function in transactivation of transcription, reduces the interaction between isoform 2 and isoform 3, disrupts the nuclear paraspeckle distribution of isoform 2 and isoform 3; dbSNP:rs886037866." evidence="22">
    <original>H</original>
    <variation>Q</variation>
    <location sequence="Q9H165-2">
        <position position="66"/>
    </location>
</feature>
<feature type="sequence variant" id="VAR_082939" description="In IDPFH, de novo mutation, loss of function transactivation of transcription, reduces the interaction between isoform 2 and isoform 3, disrupts the nuclear paraspeckle distribution of isoform 2 and isoform 3, does not affect the interaction of isoform 2 with TBR1; dbSNP:rs886037864." evidence="22">
    <original>T</original>
    <variation>P</variation>
    <location sequence="Q9H165-3">
        <position position="47"/>
    </location>
</feature>
<feature type="sequence variant" id="VAR_082940" description="In IDPFH, de novo mutation, loss of function in transactivation of transcription, reduces the interaction between isoform 2 and isoform 3, disrupts the nuclear paraspeckle distribution of isoform 2 and isoform 3, does not affect the interaction of isoform 2 with TBR1; dbSNP:rs886037865." evidence="22">
    <original>C</original>
    <variation>F</variation>
    <location sequence="Q9H165-3">
        <position position="48"/>
    </location>
</feature>
<feature type="sequence variant" id="VAR_082941" description="In IDPFH, de novo mutation, loss of function in transactivation of transcription, reduces the interaction between isoform 2 and isoform 3, disrupts the nuclear paraspeckle distribution of isoform 2 and isoform 3, does not affect the interaction of isoform 2 with TBR1; dbSNP:rs886037866." evidence="22">
    <original>H</original>
    <variation>Q</variation>
    <location sequence="Q9H165-3">
        <position position="66"/>
    </location>
</feature>
<feature type="cross-link" description="Glycyl lysine isopeptide (Lys-Gly) (interchain with G-Cter in SUMO2)" evidence="31">
    <location sequence="Q9H165-6">
        <position position="123"/>
    </location>
</feature>
<evidence type="ECO:0000250" key="1"/>
<evidence type="ECO:0000250" key="2">
    <source>
        <dbReference type="UniProtKB" id="Q9QYE3"/>
    </source>
</evidence>
<evidence type="ECO:0000255" key="3">
    <source>
        <dbReference type="PROSITE-ProRule" id="PRU00042"/>
    </source>
</evidence>
<evidence type="ECO:0000256" key="4">
    <source>
        <dbReference type="SAM" id="MobiDB-lite"/>
    </source>
</evidence>
<evidence type="ECO:0000269" key="5">
    <source>
    </source>
</evidence>
<evidence type="ECO:0000269" key="6">
    <source>
    </source>
</evidence>
<evidence type="ECO:0000269" key="7">
    <source>
    </source>
</evidence>
<evidence type="ECO:0000269" key="8">
    <source>
    </source>
</evidence>
<evidence type="ECO:0000269" key="9">
    <source>
    </source>
</evidence>
<evidence type="ECO:0000269" key="10">
    <source>
    </source>
</evidence>
<evidence type="ECO:0000269" key="11">
    <source>
    </source>
</evidence>
<evidence type="ECO:0000269" key="12">
    <source>
    </source>
</evidence>
<evidence type="ECO:0000269" key="13">
    <source>
    </source>
</evidence>
<evidence type="ECO:0000269" key="14">
    <source>
    </source>
</evidence>
<evidence type="ECO:0000269" key="15">
    <source>
    </source>
</evidence>
<evidence type="ECO:0000303" key="16">
    <source>
    </source>
</evidence>
<evidence type="ECO:0000303" key="17">
    <source>
    </source>
</evidence>
<evidence type="ECO:0000303" key="18">
    <source>
    </source>
</evidence>
<evidence type="ECO:0000303" key="19">
    <source>
    </source>
</evidence>
<evidence type="ECO:0000303" key="20">
    <source>
    </source>
</evidence>
<evidence type="ECO:0000303" key="21">
    <source ref="2"/>
</evidence>
<evidence type="ECO:0000305" key="22"/>
<evidence type="ECO:0000312" key="23">
    <source>
        <dbReference type="HGNC" id="HGNC:13221"/>
    </source>
</evidence>
<evidence type="ECO:0007744" key="24">
    <source>
        <dbReference type="PDB" id="6U9Q"/>
    </source>
</evidence>
<evidence type="ECO:0007744" key="25">
    <source>
        <dbReference type="PDB" id="8THO"/>
    </source>
</evidence>
<evidence type="ECO:0007744" key="26">
    <source>
        <dbReference type="PDB" id="8TLO"/>
    </source>
</evidence>
<evidence type="ECO:0007744" key="27">
    <source>
        <dbReference type="PDB" id="9B4P"/>
    </source>
</evidence>
<evidence type="ECO:0007744" key="28">
    <source>
    </source>
</evidence>
<evidence type="ECO:0007744" key="29">
    <source>
    </source>
</evidence>
<evidence type="ECO:0007744" key="30">
    <source>
    </source>
</evidence>
<evidence type="ECO:0007744" key="31">
    <source>
    </source>
</evidence>
<evidence type="ECO:0007829" key="32">
    <source>
        <dbReference type="PDB" id="6KI6"/>
    </source>
</evidence>
<evidence type="ECO:0007829" key="33">
    <source>
        <dbReference type="PDB" id="6U9Q"/>
    </source>
</evidence>
<evidence type="ECO:0007829" key="34">
    <source>
        <dbReference type="PDB" id="8THO"/>
    </source>
</evidence>
<evidence type="ECO:0007829" key="35">
    <source>
        <dbReference type="PDB" id="9BV0"/>
    </source>
</evidence>
<name>BC11A_HUMAN</name>
<dbReference type="EMBL" id="AJ404611">
    <property type="protein sequence ID" value="CAC17723.1"/>
    <property type="molecule type" value="mRNA"/>
</dbReference>
<dbReference type="EMBL" id="AJ404612">
    <property type="protein sequence ID" value="CAC17724.1"/>
    <property type="molecule type" value="mRNA"/>
</dbReference>
<dbReference type="EMBL" id="AJ404613">
    <property type="protein sequence ID" value="CAC17725.1"/>
    <property type="molecule type" value="mRNA"/>
</dbReference>
<dbReference type="EMBL" id="AY228763">
    <property type="protein sequence ID" value="AAO88272.1"/>
    <property type="molecule type" value="mRNA"/>
</dbReference>
<dbReference type="EMBL" id="AB058712">
    <property type="protein sequence ID" value="BAB47438.1"/>
    <property type="status" value="ALT_INIT"/>
    <property type="molecule type" value="mRNA"/>
</dbReference>
<dbReference type="EMBL" id="AY692278">
    <property type="protein sequence ID" value="AAU04557.1"/>
    <property type="molecule type" value="mRNA"/>
</dbReference>
<dbReference type="EMBL" id="AC007381">
    <property type="status" value="NOT_ANNOTATED_CDS"/>
    <property type="molecule type" value="Genomic_DNA"/>
</dbReference>
<dbReference type="EMBL" id="AC009970">
    <property type="status" value="NOT_ANNOTATED_CDS"/>
    <property type="molecule type" value="Genomic_DNA"/>
</dbReference>
<dbReference type="EMBL" id="CH471053">
    <property type="protein sequence ID" value="EAX00035.1"/>
    <property type="molecule type" value="Genomic_DNA"/>
</dbReference>
<dbReference type="EMBL" id="CH471053">
    <property type="protein sequence ID" value="EAX00040.1"/>
    <property type="molecule type" value="Genomic_DNA"/>
</dbReference>
<dbReference type="EMBL" id="CH471053">
    <property type="protein sequence ID" value="EAX00041.1"/>
    <property type="molecule type" value="Genomic_DNA"/>
</dbReference>
<dbReference type="EMBL" id="BC021098">
    <property type="protein sequence ID" value="AAH21098.1"/>
    <property type="molecule type" value="mRNA"/>
</dbReference>
<dbReference type="EMBL" id="AF080216">
    <property type="protein sequence ID" value="AAG49025.1"/>
    <property type="status" value="ALT_SEQ"/>
    <property type="molecule type" value="mRNA"/>
</dbReference>
<dbReference type="EMBL" id="AK001035">
    <property type="status" value="NOT_ANNOTATED_CDS"/>
    <property type="molecule type" value="mRNA"/>
</dbReference>
<dbReference type="CCDS" id="CCDS1861.1">
    <molecule id="Q9H165-2"/>
</dbReference>
<dbReference type="CCDS" id="CCDS1862.1">
    <molecule id="Q9H165-1"/>
</dbReference>
<dbReference type="CCDS" id="CCDS46295.1">
    <molecule id="Q9H165-3"/>
</dbReference>
<dbReference type="CCDS" id="CCDS92761.1">
    <molecule id="Q9H165-6"/>
</dbReference>
<dbReference type="RefSeq" id="NP_001352538.1">
    <molecule id="Q9H165-6"/>
    <property type="nucleotide sequence ID" value="NM_001365609.1"/>
</dbReference>
<dbReference type="RefSeq" id="NP_001392637.1">
    <molecule id="Q9H165-1"/>
    <property type="nucleotide sequence ID" value="NM_001405708.1"/>
</dbReference>
<dbReference type="RefSeq" id="NP_001392638.1">
    <molecule id="Q9H165-1"/>
    <property type="nucleotide sequence ID" value="NM_001405709.1"/>
</dbReference>
<dbReference type="RefSeq" id="NP_001392640.1">
    <molecule id="Q9H165-6"/>
    <property type="nucleotide sequence ID" value="NM_001405711.1"/>
</dbReference>
<dbReference type="RefSeq" id="NP_001392641.1">
    <molecule id="Q9H165-6"/>
    <property type="nucleotide sequence ID" value="NM_001405712.1"/>
</dbReference>
<dbReference type="RefSeq" id="NP_001392661.1">
    <molecule id="Q9H165-3"/>
    <property type="nucleotide sequence ID" value="NM_001405732.1"/>
</dbReference>
<dbReference type="RefSeq" id="NP_060484.2">
    <molecule id="Q9H165-2"/>
    <property type="nucleotide sequence ID" value="NM_018014.3"/>
</dbReference>
<dbReference type="RefSeq" id="NP_075044.2">
    <molecule id="Q9H165-1"/>
    <property type="nucleotide sequence ID" value="NM_022893.3"/>
</dbReference>
<dbReference type="RefSeq" id="NP_612569.1">
    <molecule id="Q9H165-3"/>
    <property type="nucleotide sequence ID" value="NM_138559.2"/>
</dbReference>
<dbReference type="RefSeq" id="XP_011531211.1">
    <property type="nucleotide sequence ID" value="XM_011532909.1"/>
</dbReference>
<dbReference type="RefSeq" id="XP_016859823.1">
    <property type="nucleotide sequence ID" value="XM_017004334.1"/>
</dbReference>
<dbReference type="PDB" id="5VTB">
    <property type="method" value="X-ray"/>
    <property type="resolution" value="2.40 A"/>
    <property type="chains" value="B=2-16"/>
</dbReference>
<dbReference type="PDB" id="6KI6">
    <property type="method" value="X-ray"/>
    <property type="resolution" value="2.50 A"/>
    <property type="chains" value="A/B=731-835"/>
</dbReference>
<dbReference type="PDB" id="6U9Q">
    <property type="method" value="X-ray"/>
    <property type="resolution" value="1.83 A"/>
    <property type="chains" value="A=730-835"/>
</dbReference>
<dbReference type="PDB" id="8DTN">
    <property type="method" value="X-ray"/>
    <property type="resolution" value="2.20 A"/>
    <property type="chains" value="B/D/F/H=797-826"/>
</dbReference>
<dbReference type="PDB" id="8DTU">
    <property type="method" value="X-ray"/>
    <property type="resolution" value="2.45 A"/>
    <property type="chains" value="C=799-826"/>
</dbReference>
<dbReference type="PDB" id="8THO">
    <property type="method" value="NMR"/>
    <property type="chains" value="A=737-835"/>
</dbReference>
<dbReference type="PDB" id="8TLO">
    <property type="method" value="X-ray"/>
    <property type="resolution" value="2.76 A"/>
    <property type="chains" value="A=730-835"/>
</dbReference>
<dbReference type="PDB" id="9B4P">
    <property type="method" value="X-ray"/>
    <property type="resolution" value="2.56 A"/>
    <property type="chains" value="A/B/C/D/E/F/G/H/I/J=45-71"/>
</dbReference>
<dbReference type="PDB" id="9BV0">
    <property type="method" value="NMR"/>
    <property type="chains" value="A=46-72"/>
</dbReference>
<dbReference type="PDBsum" id="5VTB"/>
<dbReference type="PDBsum" id="6KI6"/>
<dbReference type="PDBsum" id="6U9Q"/>
<dbReference type="PDBsum" id="8DTN"/>
<dbReference type="PDBsum" id="8DTU"/>
<dbReference type="PDBsum" id="8THO"/>
<dbReference type="PDBsum" id="8TLO"/>
<dbReference type="PDBsum" id="9B4P"/>
<dbReference type="PDBsum" id="9BV0"/>
<dbReference type="SMR" id="Q9H165"/>
<dbReference type="BioGRID" id="119737">
    <property type="interactions" value="101"/>
</dbReference>
<dbReference type="DIP" id="DIP-45629N"/>
<dbReference type="FunCoup" id="Q9H165">
    <property type="interactions" value="2570"/>
</dbReference>
<dbReference type="IntAct" id="Q9H165">
    <property type="interactions" value="37"/>
</dbReference>
<dbReference type="MINT" id="Q9H165"/>
<dbReference type="STRING" id="9606.ENSP00000496168"/>
<dbReference type="GlyGen" id="Q9H165">
    <property type="glycosylation" value="4 sites, 1 O-linked glycan (1 site)"/>
</dbReference>
<dbReference type="iPTMnet" id="Q9H165"/>
<dbReference type="PhosphoSitePlus" id="Q9H165"/>
<dbReference type="BioMuta" id="BCL11A"/>
<dbReference type="DMDM" id="44887724"/>
<dbReference type="jPOST" id="Q9H165"/>
<dbReference type="MassIVE" id="Q9H165"/>
<dbReference type="PaxDb" id="9606-ENSP00000338774"/>
<dbReference type="PeptideAtlas" id="Q9H165"/>
<dbReference type="ProteomicsDB" id="80362">
    <molecule id="Q9H165-1"/>
</dbReference>
<dbReference type="ProteomicsDB" id="80363">
    <molecule id="Q9H165-2"/>
</dbReference>
<dbReference type="ProteomicsDB" id="80364">
    <molecule id="Q9H165-3"/>
</dbReference>
<dbReference type="ProteomicsDB" id="80367">
    <molecule id="Q9H165-6"/>
</dbReference>
<dbReference type="Antibodypedia" id="30518">
    <property type="antibodies" value="491 antibodies from 37 providers"/>
</dbReference>
<dbReference type="DNASU" id="53335"/>
<dbReference type="Ensembl" id="ENST00000335712.11">
    <molecule id="Q9H165-6"/>
    <property type="protein sequence ID" value="ENSP00000338774.7"/>
    <property type="gene ID" value="ENSG00000119866.22"/>
</dbReference>
<dbReference type="Ensembl" id="ENST00000356842.9">
    <molecule id="Q9H165-2"/>
    <property type="protein sequence ID" value="ENSP00000349300.4"/>
    <property type="gene ID" value="ENSG00000119866.22"/>
</dbReference>
<dbReference type="Ensembl" id="ENST00000359629.10">
    <molecule id="Q9H165-3"/>
    <property type="protein sequence ID" value="ENSP00000352648.5"/>
    <property type="gene ID" value="ENSG00000119866.22"/>
</dbReference>
<dbReference type="Ensembl" id="ENST00000409351.5">
    <molecule id="Q9H165-8"/>
    <property type="protein sequence ID" value="ENSP00000487844.1"/>
    <property type="gene ID" value="ENSG00000119866.22"/>
</dbReference>
<dbReference type="Ensembl" id="ENST00000642384.2">
    <molecule id="Q9H165-1"/>
    <property type="protein sequence ID" value="ENSP00000496168.1"/>
    <property type="gene ID" value="ENSG00000119866.22"/>
</dbReference>
<dbReference type="GeneID" id="53335"/>
<dbReference type="KEGG" id="hsa:53335"/>
<dbReference type="MANE-Select" id="ENST00000642384.2">
    <property type="protein sequence ID" value="ENSP00000496168.1"/>
    <property type="RefSeq nucleotide sequence ID" value="NM_022893.4"/>
    <property type="RefSeq protein sequence ID" value="NP_075044.2"/>
</dbReference>
<dbReference type="UCSC" id="uc002sab.4">
    <molecule id="Q9H165-1"/>
    <property type="organism name" value="human"/>
</dbReference>
<dbReference type="AGR" id="HGNC:13221"/>
<dbReference type="CTD" id="53335"/>
<dbReference type="DisGeNET" id="53335"/>
<dbReference type="GeneCards" id="BCL11A"/>
<dbReference type="GeneReviews" id="BCL11A"/>
<dbReference type="HGNC" id="HGNC:13221">
    <property type="gene designation" value="BCL11A"/>
</dbReference>
<dbReference type="HPA" id="ENSG00000119866">
    <property type="expression patterns" value="Tissue enhanced (brain, lymphoid tissue, skin)"/>
</dbReference>
<dbReference type="MalaCards" id="BCL11A"/>
<dbReference type="MIM" id="142335">
    <property type="type" value="phenotype"/>
</dbReference>
<dbReference type="MIM" id="606557">
    <property type="type" value="gene"/>
</dbReference>
<dbReference type="MIM" id="617101">
    <property type="type" value="phenotype"/>
</dbReference>
<dbReference type="neXtProt" id="NX_Q9H165"/>
<dbReference type="OpenTargets" id="ENSG00000119866"/>
<dbReference type="Orphanet" id="619233">
    <property type="disease" value="Hereditary persistence of fetal hemoglobin-intellectual disability syndrome"/>
</dbReference>
<dbReference type="Orphanet" id="251380">
    <property type="disease" value="Hereditary persistence of fetal hemoglobin-sickle cell disease syndrome"/>
</dbReference>
<dbReference type="PharmGKB" id="PA25300"/>
<dbReference type="VEuPathDB" id="HostDB:ENSG00000119866"/>
<dbReference type="eggNOG" id="KOG1721">
    <property type="taxonomic scope" value="Eukaryota"/>
</dbReference>
<dbReference type="GeneTree" id="ENSGT00940000156983"/>
<dbReference type="HOGENOM" id="CLU_007684_1_0_1"/>
<dbReference type="InParanoid" id="Q9H165"/>
<dbReference type="OMA" id="TKCCEFC"/>
<dbReference type="OrthoDB" id="10046198at2759"/>
<dbReference type="PAN-GO" id="Q9H165">
    <property type="GO annotations" value="5 GO annotations based on evolutionary models"/>
</dbReference>
<dbReference type="PhylomeDB" id="Q9H165"/>
<dbReference type="TreeFam" id="TF318131"/>
<dbReference type="PathwayCommons" id="Q9H165"/>
<dbReference type="Reactome" id="R-HSA-9700645">
    <property type="pathway name" value="ALK mutants bind TKIs"/>
</dbReference>
<dbReference type="Reactome" id="R-HSA-9725370">
    <property type="pathway name" value="Signaling by ALK fusions and activated point mutants"/>
</dbReference>
<dbReference type="SignaLink" id="Q9H165"/>
<dbReference type="SIGNOR" id="Q9H165"/>
<dbReference type="BioGRID-ORCS" id="53335">
    <property type="hits" value="15 hits in 1169 CRISPR screens"/>
</dbReference>
<dbReference type="CD-CODE" id="1A18FFC4">
    <property type="entry name" value="Paraspeckle"/>
</dbReference>
<dbReference type="ChiTaRS" id="BCL11A">
    <property type="organism name" value="human"/>
</dbReference>
<dbReference type="GeneWiki" id="BCL11A"/>
<dbReference type="GenomeRNAi" id="53335"/>
<dbReference type="Pharos" id="Q9H165">
    <property type="development level" value="Tbio"/>
</dbReference>
<dbReference type="PRO" id="PR:Q9H165"/>
<dbReference type="Proteomes" id="UP000005640">
    <property type="component" value="Chromosome 2"/>
</dbReference>
<dbReference type="RNAct" id="Q9H165">
    <property type="molecule type" value="protein"/>
</dbReference>
<dbReference type="Bgee" id="ENSG00000119866">
    <property type="expression patterns" value="Expressed in cortical plate and 172 other cell types or tissues"/>
</dbReference>
<dbReference type="ExpressionAtlas" id="Q9H165">
    <property type="expression patterns" value="baseline and differential"/>
</dbReference>
<dbReference type="GO" id="GO:0005737">
    <property type="term" value="C:cytoplasm"/>
    <property type="evidence" value="ECO:0000250"/>
    <property type="project" value="BHF-UCL"/>
</dbReference>
<dbReference type="GO" id="GO:0005829">
    <property type="term" value="C:cytosol"/>
    <property type="evidence" value="ECO:0000304"/>
    <property type="project" value="Reactome"/>
</dbReference>
<dbReference type="GO" id="GO:0016363">
    <property type="term" value="C:nuclear matrix"/>
    <property type="evidence" value="ECO:0007669"/>
    <property type="project" value="UniProtKB-SubCell"/>
</dbReference>
<dbReference type="GO" id="GO:0005654">
    <property type="term" value="C:nucleoplasm"/>
    <property type="evidence" value="ECO:0000314"/>
    <property type="project" value="HPA"/>
</dbReference>
<dbReference type="GO" id="GO:0005634">
    <property type="term" value="C:nucleus"/>
    <property type="evidence" value="ECO:0000314"/>
    <property type="project" value="BHF-UCL"/>
</dbReference>
<dbReference type="GO" id="GO:0042382">
    <property type="term" value="C:paraspeckles"/>
    <property type="evidence" value="ECO:0000314"/>
    <property type="project" value="UniProtKB"/>
</dbReference>
<dbReference type="GO" id="GO:0098794">
    <property type="term" value="C:postsynapse"/>
    <property type="evidence" value="ECO:0007669"/>
    <property type="project" value="Ensembl"/>
</dbReference>
<dbReference type="GO" id="GO:0016514">
    <property type="term" value="C:SWI/SNF complex"/>
    <property type="evidence" value="ECO:0000314"/>
    <property type="project" value="UniProtKB"/>
</dbReference>
<dbReference type="GO" id="GO:0003700">
    <property type="term" value="F:DNA-binding transcription factor activity"/>
    <property type="evidence" value="ECO:0000318"/>
    <property type="project" value="GO_Central"/>
</dbReference>
<dbReference type="GO" id="GO:0140297">
    <property type="term" value="F:DNA-binding transcription factor binding"/>
    <property type="evidence" value="ECO:0000353"/>
    <property type="project" value="UniProtKB"/>
</dbReference>
<dbReference type="GO" id="GO:0001227">
    <property type="term" value="F:DNA-binding transcription repressor activity, RNA polymerase II-specific"/>
    <property type="evidence" value="ECO:0000314"/>
    <property type="project" value="NTNU_SB"/>
</dbReference>
<dbReference type="GO" id="GO:0046982">
    <property type="term" value="F:protein heterodimerization activity"/>
    <property type="evidence" value="ECO:0000353"/>
    <property type="project" value="BHF-UCL"/>
</dbReference>
<dbReference type="GO" id="GO:0042803">
    <property type="term" value="F:protein homodimerization activity"/>
    <property type="evidence" value="ECO:0000353"/>
    <property type="project" value="UniProtKB"/>
</dbReference>
<dbReference type="GO" id="GO:0019901">
    <property type="term" value="F:protein kinase binding"/>
    <property type="evidence" value="ECO:0007669"/>
    <property type="project" value="Ensembl"/>
</dbReference>
<dbReference type="GO" id="GO:0000978">
    <property type="term" value="F:RNA polymerase II cis-regulatory region sequence-specific DNA binding"/>
    <property type="evidence" value="ECO:0000314"/>
    <property type="project" value="NTNU_SB"/>
</dbReference>
<dbReference type="GO" id="GO:0003712">
    <property type="term" value="F:transcription coregulator activity"/>
    <property type="evidence" value="ECO:0000314"/>
    <property type="project" value="ARUK-UCL"/>
</dbReference>
<dbReference type="GO" id="GO:0001067">
    <property type="term" value="F:transcription regulatory region nucleic acid binding"/>
    <property type="evidence" value="ECO:0000314"/>
    <property type="project" value="ARUK-UCL"/>
</dbReference>
<dbReference type="GO" id="GO:0008270">
    <property type="term" value="F:zinc ion binding"/>
    <property type="evidence" value="ECO:0007669"/>
    <property type="project" value="UniProtKB-KW"/>
</dbReference>
<dbReference type="GO" id="GO:1905232">
    <property type="term" value="P:cellular response to L-glutamate"/>
    <property type="evidence" value="ECO:0007669"/>
    <property type="project" value="Ensembl"/>
</dbReference>
<dbReference type="GO" id="GO:0030517">
    <property type="term" value="P:negative regulation of axon extension"/>
    <property type="evidence" value="ECO:0000250"/>
    <property type="project" value="BHF-UCL"/>
</dbReference>
<dbReference type="GO" id="GO:2000173">
    <property type="term" value="P:negative regulation of branching morphogenesis of a nerve"/>
    <property type="evidence" value="ECO:0007669"/>
    <property type="project" value="Ensembl"/>
</dbReference>
<dbReference type="GO" id="GO:0048671">
    <property type="term" value="P:negative regulation of collateral sprouting"/>
    <property type="evidence" value="ECO:0000315"/>
    <property type="project" value="BHF-UCL"/>
</dbReference>
<dbReference type="GO" id="GO:2000171">
    <property type="term" value="P:negative regulation of dendrite development"/>
    <property type="evidence" value="ECO:0000315"/>
    <property type="project" value="BHF-UCL"/>
</dbReference>
<dbReference type="GO" id="GO:1903860">
    <property type="term" value="P:negative regulation of dendrite extension"/>
    <property type="evidence" value="ECO:0007669"/>
    <property type="project" value="Ensembl"/>
</dbReference>
<dbReference type="GO" id="GO:0010977">
    <property type="term" value="P:negative regulation of neuron projection development"/>
    <property type="evidence" value="ECO:0000314"/>
    <property type="project" value="BHF-UCL"/>
</dbReference>
<dbReference type="GO" id="GO:1904800">
    <property type="term" value="P:negative regulation of neuron remodeling"/>
    <property type="evidence" value="ECO:0007669"/>
    <property type="project" value="Ensembl"/>
</dbReference>
<dbReference type="GO" id="GO:0032463">
    <property type="term" value="P:negative regulation of protein homooligomerization"/>
    <property type="evidence" value="ECO:0000305"/>
    <property type="project" value="BHF-UCL"/>
</dbReference>
<dbReference type="GO" id="GO:0000122">
    <property type="term" value="P:negative regulation of transcription by RNA polymerase II"/>
    <property type="evidence" value="ECO:0000314"/>
    <property type="project" value="NTNU_SB"/>
</dbReference>
<dbReference type="GO" id="GO:0048672">
    <property type="term" value="P:positive regulation of collateral sprouting"/>
    <property type="evidence" value="ECO:0000315"/>
    <property type="project" value="BHF-UCL"/>
</dbReference>
<dbReference type="GO" id="GO:0010628">
    <property type="term" value="P:positive regulation of gene expression"/>
    <property type="evidence" value="ECO:0007669"/>
    <property type="project" value="Ensembl"/>
</dbReference>
<dbReference type="GO" id="GO:0010976">
    <property type="term" value="P:positive regulation of neuron projection development"/>
    <property type="evidence" value="ECO:0000314"/>
    <property type="project" value="BHF-UCL"/>
</dbReference>
<dbReference type="GO" id="GO:0045944">
    <property type="term" value="P:positive regulation of transcription by RNA polymerase II"/>
    <property type="evidence" value="ECO:0000250"/>
    <property type="project" value="BHF-UCL"/>
</dbReference>
<dbReference type="GO" id="GO:0016925">
    <property type="term" value="P:protein sumoylation"/>
    <property type="evidence" value="ECO:0000250"/>
    <property type="project" value="UniProtKB"/>
</dbReference>
<dbReference type="GO" id="GO:0050773">
    <property type="term" value="P:regulation of dendrite development"/>
    <property type="evidence" value="ECO:0000315"/>
    <property type="project" value="BHF-UCL"/>
</dbReference>
<dbReference type="GO" id="GO:0006357">
    <property type="term" value="P:regulation of transcription by RNA polymerase II"/>
    <property type="evidence" value="ECO:0000318"/>
    <property type="project" value="GO_Central"/>
</dbReference>
<dbReference type="FunFam" id="3.30.160.60:FF:000037">
    <property type="entry name" value="B-cell lymphoma/leukemia 11A isoform X1"/>
    <property type="match status" value="1"/>
</dbReference>
<dbReference type="FunFam" id="3.30.160.60:FF:000106">
    <property type="entry name" value="B-cell lymphoma/leukemia 11A isoform X2"/>
    <property type="match status" value="1"/>
</dbReference>
<dbReference type="FunFam" id="3.30.160.60:FF:000046">
    <property type="entry name" value="Putative B-cell lymphoma/leukemia 11A"/>
    <property type="match status" value="1"/>
</dbReference>
<dbReference type="FunFam" id="3.30.160.60:FF:001175">
    <property type="entry name" value="Zinc finger, C2H2 type"/>
    <property type="match status" value="1"/>
</dbReference>
<dbReference type="Gene3D" id="3.30.160.60">
    <property type="entry name" value="Classic Zinc Finger"/>
    <property type="match status" value="4"/>
</dbReference>
<dbReference type="InterPro" id="IPR051497">
    <property type="entry name" value="Dev/Hematopoietic_TF"/>
</dbReference>
<dbReference type="InterPro" id="IPR056438">
    <property type="entry name" value="Znf-C2H2_CTCF"/>
</dbReference>
<dbReference type="InterPro" id="IPR036236">
    <property type="entry name" value="Znf_C2H2_sf"/>
</dbReference>
<dbReference type="InterPro" id="IPR013087">
    <property type="entry name" value="Znf_C2H2_type"/>
</dbReference>
<dbReference type="PANTHER" id="PTHR45993">
    <property type="entry name" value="B-CELL LYMPHOMA/LEUKEMIA 11"/>
    <property type="match status" value="1"/>
</dbReference>
<dbReference type="PANTHER" id="PTHR45993:SF5">
    <property type="entry name" value="B-CELL LYMPHOMA_LEUKEMIA 11A"/>
    <property type="match status" value="1"/>
</dbReference>
<dbReference type="Pfam" id="PF25491">
    <property type="entry name" value="CCHC_BCL-11A"/>
    <property type="match status" value="1"/>
</dbReference>
<dbReference type="Pfam" id="PF00096">
    <property type="entry name" value="zf-C2H2"/>
    <property type="match status" value="4"/>
</dbReference>
<dbReference type="Pfam" id="PF23611">
    <property type="entry name" value="zf-C2H2_16"/>
    <property type="match status" value="1"/>
</dbReference>
<dbReference type="SMART" id="SM00355">
    <property type="entry name" value="ZnF_C2H2"/>
    <property type="match status" value="6"/>
</dbReference>
<dbReference type="SUPFAM" id="SSF57667">
    <property type="entry name" value="beta-beta-alpha zinc fingers"/>
    <property type="match status" value="3"/>
</dbReference>
<dbReference type="PROSITE" id="PS00028">
    <property type="entry name" value="ZINC_FINGER_C2H2_1"/>
    <property type="match status" value="6"/>
</dbReference>
<dbReference type="PROSITE" id="PS50157">
    <property type="entry name" value="ZINC_FINGER_C2H2_2"/>
    <property type="match status" value="6"/>
</dbReference>
<gene>
    <name type="primary">BCL11A</name>
    <name type="synonym">CTIP1</name>
    <name type="synonym">EVI9</name>
    <name type="synonym">KIAA1809</name>
    <name type="synonym">ZNF856</name>
</gene>
<protein>
    <recommendedName>
        <fullName evidence="23">BCL11 transcription factor A</fullName>
    </recommendedName>
    <alternativeName>
        <fullName>B-cell CLL/lymphoma 11A</fullName>
    </alternativeName>
    <alternativeName>
        <fullName evidence="17">B-cell lymphoma/leukemia 11A</fullName>
        <shortName>BCL-11A</shortName>
    </alternativeName>
    <alternativeName>
        <fullName>COUP-TF-interacting protein 1</fullName>
    </alternativeName>
    <alternativeName>
        <fullName>Ecotropic viral integration site 9 protein homolog</fullName>
        <shortName>EVI-9</shortName>
    </alternativeName>
    <alternativeName>
        <fullName>Zinc finger protein 856</fullName>
    </alternativeName>
</protein>
<keyword id="KW-0002">3D-structure</keyword>
<keyword id="KW-0025">Alternative splicing</keyword>
<keyword id="KW-0160">Chromosomal rearrangement</keyword>
<keyword id="KW-0158">Chromosome</keyword>
<keyword id="KW-0963">Cytoplasm</keyword>
<keyword id="KW-0225">Disease variant</keyword>
<keyword id="KW-0238">DNA-binding</keyword>
<keyword id="KW-0991">Intellectual disability</keyword>
<keyword id="KW-1017">Isopeptide bond</keyword>
<keyword id="KW-0479">Metal-binding</keyword>
<keyword id="KW-0488">Methylation</keyword>
<keyword id="KW-0539">Nucleus</keyword>
<keyword id="KW-0597">Phosphoprotein</keyword>
<keyword id="KW-1267">Proteomics identification</keyword>
<keyword id="KW-1185">Reference proteome</keyword>
<keyword id="KW-0677">Repeat</keyword>
<keyword id="KW-0678">Repressor</keyword>
<keyword id="KW-0804">Transcription</keyword>
<keyword id="KW-0805">Transcription regulation</keyword>
<keyword id="KW-0832">Ubl conjugation</keyword>
<keyword id="KW-0862">Zinc</keyword>
<keyword id="KW-0863">Zinc-finger</keyword>
<proteinExistence type="evidence at protein level"/>
<comment type="function">
    <text evidence="2 7 10 12 14 15 19 20">Transcription factor (PubMed:16704730, PubMed:29606353). Associated with the BAF SWI/SNF chromatin remodeling complex (PubMed:23644491, PubMed:39607926). Binds to the 5'-TGACCA-3' sequence motif in regulatory regions of target genes, including a distal promoter of the HBG1 hemoglobin subunit gamma-1 gene (PubMed:29606353, PubMed:39423807). Involved in regulation of the developmental switch from gamma- to beta-globin, probably via direct repression of HBG1; hence indirectly repressing fetal hemoglobin (HbF) level (PubMed:26375765, PubMed:29606353, PubMed:39423807, PubMed:39607926). Involved in brain development (PubMed:27453576). May play a role in hematopoiesis (By similarity). Essential factor in lymphopoiesis required for B-cell formation in fetal liver (By similarity). May function as a modulator of the transcriptional repression activity of NR2F2 (By similarity).</text>
</comment>
<comment type="subunit">
    <text evidence="2 11 13 14 15">Homotetrameric; self-associates via C2HC-type zinc finger domain (PubMed:39607926). Interacts with MTA2, a component of the nucleosome remodeling and deacetylase (NuRD) repressor complex (PubMed:39607926). Interacts (via its C2H2-type zinc finger domains 4, 5 and 6) with promoter region of gamma-globulin (PubMed:39423807). Interacts with NR2F1, PIAS3, NR2F2 and NR2F6 (By similarity). Isoform 1, isoform 2 and isoform 3 form homodimers and heterodimers (PubMed:27453576, PubMed:30250039). Isoform 2 interacts with TBR1 (PubMed:30250039).</text>
</comment>
<comment type="interaction">
    <interactant intactId="EBI-10183342">
        <id>Q9H165-2</id>
    </interactant>
    <interactant intactId="EBI-745707">
        <id>Q8NEA9</id>
        <label>GMCL2</label>
    </interactant>
    <organismsDiffer>false</organismsDiffer>
    <experiments>3</experiments>
</comment>
<comment type="interaction">
    <interactant intactId="EBI-10183342">
        <id>Q9H165-2</id>
    </interactant>
    <interactant intactId="EBI-8639312">
        <id>P25800</id>
        <label>LMO1</label>
    </interactant>
    <organismsDiffer>false</organismsDiffer>
    <experiments>3</experiments>
</comment>
<comment type="interaction">
    <interactant intactId="EBI-10183342">
        <id>Q9H165-2</id>
    </interactant>
    <interactant intactId="EBI-399257">
        <id>Q15014</id>
        <label>MORF4L2</label>
    </interactant>
    <organismsDiffer>false</organismsDiffer>
    <experiments>3</experiments>
</comment>
<comment type="interaction">
    <interactant intactId="EBI-10183342">
        <id>Q9H165-2</id>
    </interactant>
    <interactant intactId="EBI-713635">
        <id>O43639</id>
        <label>NCK2</label>
    </interactant>
    <organismsDiffer>false</organismsDiffer>
    <experiments>6</experiments>
</comment>
<comment type="interaction">
    <interactant intactId="EBI-10183342">
        <id>Q9H165-2</id>
    </interactant>
    <interactant intactId="EBI-11990542">
        <id>Q8NET5</id>
        <label>NFAM1</label>
    </interactant>
    <organismsDiffer>false</organismsDiffer>
    <experiments>3</experiments>
</comment>
<comment type="interaction">
    <interactant intactId="EBI-10183342">
        <id>Q9H165-2</id>
    </interactant>
    <interactant intactId="EBI-714158">
        <id>Q13526</id>
        <label>PIN1</label>
    </interactant>
    <organismsDiffer>false</organismsDiffer>
    <experiments>3</experiments>
</comment>
<comment type="interaction">
    <interactant intactId="EBI-10183342">
        <id>Q9H165-2</id>
    </interactant>
    <interactant intactId="EBI-744471">
        <id>O43167</id>
        <label>ZBTB24</label>
    </interactant>
    <organismsDiffer>false</organismsDiffer>
    <experiments>3</experiments>
</comment>
<comment type="subcellular location">
    <subcellularLocation>
        <location evidence="5">Cytoplasm</location>
    </subcellularLocation>
    <subcellularLocation>
        <location evidence="5">Nucleus</location>
    </subcellularLocation>
    <subcellularLocation>
        <location evidence="12">Chromosome</location>
    </subcellularLocation>
    <text evidence="1">Associates with the nuclear body. Colocalizes with SUMO1 and SENP2 in nuclear speckles (By similarity).</text>
</comment>
<comment type="subcellular location">
    <molecule>Isoform 1</molecule>
    <subcellularLocation>
        <location evidence="7">Nucleus matrix</location>
    </subcellularLocation>
    <text evidence="7">Colocalizes with BCL6 in nuclear paraspeckles.</text>
</comment>
<comment type="subcellular location">
    <molecule>Isoform 2</molecule>
    <subcellularLocation>
        <location evidence="11">Cytoplasm</location>
    </subcellularLocation>
    <subcellularLocation>
        <location evidence="11">Nucleus</location>
    </subcellularLocation>
    <text evidence="11">Predominantly localized in the nucleus in nuclear paraspeckles.</text>
</comment>
<comment type="subcellular location">
    <molecule>Isoform 3</molecule>
    <subcellularLocation>
        <location evidence="11">Cytoplasm</location>
    </subcellularLocation>
    <subcellularLocation>
        <location evidence="11">Nucleus</location>
    </subcellularLocation>
    <text evidence="11">Predominantly localized in the cytoplasm in the absence of interaction with isoform 1 and isoform 2. In presence of isoform 1 or isoform 2, translocates from the cytoplasm into nuclear paraspeckles.</text>
</comment>
<comment type="alternative products">
    <event type="alternative splicing"/>
    <isoform>
        <id>Q9H165-1</id>
        <name>1</name>
        <name evidence="17">BCL11A-XL</name>
        <name>BCL11A extra long form</name>
        <sequence type="displayed"/>
    </isoform>
    <isoform>
        <id>Q9H165-2</id>
        <name>2</name>
        <name evidence="17">BCL11A-L</name>
        <name>BCL11A long form</name>
        <sequence type="described" ref="VSP_009554 VSP_009555"/>
    </isoform>
    <isoform>
        <id>Q9H165-3</id>
        <name evidence="17">3</name>
        <name>BCL11A-S</name>
        <name>BCL11A short form</name>
        <sequence type="described" ref="VSP_009550 VSP_009552"/>
    </isoform>
    <isoform>
        <id>Q9H165-6</id>
        <name>6</name>
        <sequence type="described" ref="VSP_009548"/>
    </isoform>
    <isoform>
        <id>Q9H165-8</id>
        <name>7</name>
        <name>BCL11A-XS</name>
        <name>BCL11A eXtra short form</name>
        <sequence type="described" ref="VSP_058656 VSP_058657"/>
    </isoform>
</comment>
<comment type="tissue specificity">
    <text evidence="5 6">Expressed at high levels in brain, spleen thymus, bone marrow and testis. Expressed in CD34-positive myeloid precursor cells, B-cells, monocytes and megakaryocytes. Expression is tightly regulated during B-cell development.</text>
</comment>
<comment type="tissue specificity">
    <molecule>Isoform 1</molecule>
    <text evidence="7">Expressed in fetal and adult brain, and in the plasmacytoid dendritic cell.</text>
</comment>
<comment type="domain">
    <text evidence="11">The N-terminus is involved in protein dimerization and in transactivation of transcription.</text>
</comment>
<comment type="domain">
    <text evidence="13">The C-terminus of isoform 2 is necessary for isoform 2 interaction with TBR1.</text>
</comment>
<comment type="domain">
    <text evidence="12">Zinc finger domains are necessary for sequence-specific binding to DNA.</text>
</comment>
<comment type="PTM">
    <text evidence="2">Sumoylated with SUMO1.</text>
</comment>
<comment type="polymorphism">
    <text evidence="9">Genetic variation in BCL11A underlies the fetal hemoglobin quantitative trait locus 5 [MIM:142335]. It is associated with quantitative variation in the production of F cells, that is erythrocytes containing measurable amounts of fetal hemoglobin (HbF). In healthy adults, HbF is present at residual levels (less than 0.6% of total hemoglobin) with over twenty-fold variation. Ten to fifteen percent of adults in the upper tail of the distribution have HbF levels between 0.8% and 5.0%, a condition referred to as heterocellular hereditary persistence of fetal hemoglobin (hHPFH). Although these HbF levels are modest in otherwise healthy individuals, interaction of hHPFH with beta thalassemia or sickle cell disease can increase HbF output in these individuals to levels that are clinically beneficial.</text>
</comment>
<comment type="disease">
    <text evidence="6">Chromosomal aberrations involving BCL11A are associated with B-cell malignancies. Translocation t(2;14)(p13;q32.3) causes BCL11A deregulation and overexpression.</text>
</comment>
<comment type="disease" evidence="11 13">
    <disease id="DI-04812">
        <name>Intellectual developmental disorder with persistence of fetal hemoglobin</name>
        <acronym>IDPFH</acronym>
        <description>An autosomal dominant disorder characterized by delayed psychomotor development, intellectual disability, variable dysmorphic features, including microcephaly, downslanting palpebral fissures, strabismus, and external ear abnormalities, and asymptomatic persistence of fetal hemoglobin.</description>
        <dbReference type="MIM" id="617101"/>
    </disease>
    <text>The disease is caused by variants affecting the gene represented in this entry.</text>
</comment>
<comment type="sequence caution" evidence="22">
    <conflict type="miscellaneous discrepancy">
        <sequence resource="EMBL-CDS" id="AAG49025"/>
    </conflict>
</comment>
<comment type="sequence caution" evidence="22">
    <conflict type="erroneous initiation">
        <sequence resource="EMBL-CDS" id="BAB47438"/>
    </conflict>
    <text>Truncated N-terminus.</text>
</comment>
<comment type="online information" name="Atlas of Genetics and Cytogenetics in Oncology and Haematology">
    <link uri="https://atlasgeneticsoncology.org/gene/391/BCL11A"/>
</comment>
<sequence>MSRRKQGKPQHLSKREFSPEPLEAILTDDEPDHGPLGAPEGDHDLLTCGQCQMNFPLGDILIFIEHKRKQCNGSLCLEKAVDKPPSPSPIEMKKASNPVEVGIQVTPEDDDCLSTSSRGICPKQEHIADKLLHWRGLSSPRSAHGALIPTPGMSAEYAPQGICKDEPSSYTCTTCKQPFTSAWFLLQHAQNTHGLRIYLESEHGSPLTPRVGIPSGLGAECPSQPPLHGIHIADNNPFNLLRIPGSVSREASGLAEGRFPPTPPLFSPPPRHHLDPHRIERLGAEEMALATHHPSAFDRVLRLNPMAMEPPAMDFSRRLRELAGNTSSPPLSPGRPSPMQRLLQPFQPGSKPPFLATPPLPPLQSAPPPSQPPVKSKSCEFCGKTFKFQSNLVVHRRSHTGEKPYKCNLCDHACTQASKLKRHMKTHMHKSSPMTVKSDDGLSTASSPEPGTSDLVGSASSALKSVVAKFKSENDPNLIPENGDEEEEEDDEEEEEEEEEEEEELTESERVDYGFGLSLEAARHHENSSRGAVVGVGDESRALPDVMQGMVLSSMQHFSEAFHQVLGEKHKRGHLAEAEGHRDTCDEDSVAGESDRIDDGTVNGRGCSPGESASGGLSKKLLLGSPSSLSPFSKRIKLEKEFDLPPAAMPNTENVYSQWLAGYAASRQLKDPFLSFGDSRQSPFASSSEHSSENGSLRFSTPPGELDGGISGRSGTGSGGSTPHISGPGPGRPSSKEGRRSDTCEYCGKVFKNCSNLTVHRRSHTGERPYKCELCNYACAQSSKLTRHMKTHGQVGKDVYKCEICKMPFSVYSTLEKHMKKWHSDRVLNNDIKTE</sequence>
<organism>
    <name type="scientific">Homo sapiens</name>
    <name type="common">Human</name>
    <dbReference type="NCBI Taxonomy" id="9606"/>
    <lineage>
        <taxon>Eukaryota</taxon>
        <taxon>Metazoa</taxon>
        <taxon>Chordata</taxon>
        <taxon>Craniata</taxon>
        <taxon>Vertebrata</taxon>
        <taxon>Euteleostomi</taxon>
        <taxon>Mammalia</taxon>
        <taxon>Eutheria</taxon>
        <taxon>Euarchontoglires</taxon>
        <taxon>Primates</taxon>
        <taxon>Haplorrhini</taxon>
        <taxon>Catarrhini</taxon>
        <taxon>Hominidae</taxon>
        <taxon>Homo</taxon>
    </lineage>
</organism>
<accession>Q9H165</accession>
<accession>D6W5D7</accession>
<accession>Q66LN6</accession>
<accession>Q86W14</accession>
<accession>Q8WU92</accession>
<accession>Q96JL6</accession>
<accession>Q9H163</accession>
<accession>Q9H164</accession>
<accession>Q9H3G9</accession>
<accession>Q9NWA7</accession>
<reference key="1">
    <citation type="journal article" date="2001" name="Blood">
        <title>The BCL11 gene family: involvement of BCL11A in lymphoid malignancies.</title>
        <authorList>
            <person name="Satterwhite E."/>
            <person name="Sonoki T."/>
            <person name="Willis T.G."/>
            <person name="Harder L."/>
            <person name="Nowak R."/>
            <person name="Arriola E.L."/>
            <person name="Liu H."/>
            <person name="Price H.P."/>
            <person name="Gesk S."/>
            <person name="Steinemann D."/>
            <person name="Schlegelberger B."/>
            <person name="Oscier D.G."/>
            <person name="Siebert R."/>
            <person name="Tucker P.W."/>
            <person name="Dyer M.J."/>
        </authorList>
    </citation>
    <scope>NUCLEOTIDE SEQUENCE [MRNA] (ISOFORMS 1; 2 AND 3)</scope>
    <scope>TISSUE SPECIFICITY</scope>
    <scope>CHROMOSOMAL TRANSLOCATION</scope>
</reference>
<reference key="2">
    <citation type="submission" date="2003-02" db="EMBL/GenBank/DDBJ databases">
        <title>Identification of a new isoform for B-cell CLL/lymphoma 11A (BCL11A) gene.</title>
        <authorList>
            <person name="Suriyapperuma S.P."/>
            <person name="Sarfarazi M."/>
        </authorList>
    </citation>
    <scope>NUCLEOTIDE SEQUENCE [MRNA] (ISOFORM 6)</scope>
</reference>
<reference key="3">
    <citation type="submission" date="2004-07" db="EMBL/GenBank/DDBJ databases">
        <title>Identification of a novel isoform of BCL11A: BCL11A-XS (extra-short).</title>
        <authorList>
            <person name="Ippolito G.C."/>
            <person name="Wall J.K."/>
            <person name="Allred L.K."/>
            <person name="Tucker P.W."/>
        </authorList>
    </citation>
    <scope>NUCLEOTIDE SEQUENCE [MRNA] (ISOFORM 7)</scope>
    <source>
        <tissue>Tonsil</tissue>
    </source>
</reference>
<reference key="4">
    <citation type="journal article" date="2001" name="DNA Res.">
        <title>Prediction of the coding sequences of unidentified human genes. XX. The complete sequences of 100 new cDNA clones from brain which code for large proteins in vitro.</title>
        <authorList>
            <person name="Nagase T."/>
            <person name="Nakayama M."/>
            <person name="Nakajima D."/>
            <person name="Kikuno R."/>
            <person name="Ohara O."/>
        </authorList>
    </citation>
    <scope>NUCLEOTIDE SEQUENCE [LARGE SCALE MRNA] (ISOFORM 2)</scope>
    <source>
        <tissue>Brain</tissue>
    </source>
</reference>
<reference key="5">
    <citation type="submission" date="2005-09" db="EMBL/GenBank/DDBJ databases">
        <authorList>
            <person name="Mural R.J."/>
            <person name="Istrail S."/>
            <person name="Sutton G.G."/>
            <person name="Florea L."/>
            <person name="Halpern A.L."/>
            <person name="Mobarry C.M."/>
            <person name="Lippert R."/>
            <person name="Walenz B."/>
            <person name="Shatkay H."/>
            <person name="Dew I."/>
            <person name="Miller J.R."/>
            <person name="Flanigan M.J."/>
            <person name="Edwards N.J."/>
            <person name="Bolanos R."/>
            <person name="Fasulo D."/>
            <person name="Halldorsson B.V."/>
            <person name="Hannenhalli S."/>
            <person name="Turner R."/>
            <person name="Yooseph S."/>
            <person name="Lu F."/>
            <person name="Nusskern D.R."/>
            <person name="Shue B.C."/>
            <person name="Zheng X.H."/>
            <person name="Zhong F."/>
            <person name="Delcher A.L."/>
            <person name="Huson D.H."/>
            <person name="Kravitz S.A."/>
            <person name="Mouchard L."/>
            <person name="Reinert K."/>
            <person name="Remington K.A."/>
            <person name="Clark A.G."/>
            <person name="Waterman M.S."/>
            <person name="Eichler E.E."/>
            <person name="Adams M.D."/>
            <person name="Hunkapiller M.W."/>
            <person name="Myers E.W."/>
            <person name="Venter J.C."/>
        </authorList>
    </citation>
    <scope>NUCLEOTIDE SEQUENCE [LARGE SCALE GENOMIC DNA]</scope>
</reference>
<reference key="6">
    <citation type="journal article" date="2004" name="Genome Res.">
        <title>The status, quality, and expansion of the NIH full-length cDNA project: the Mammalian Gene Collection (MGC).</title>
        <authorList>
            <consortium name="The MGC Project Team"/>
        </authorList>
    </citation>
    <scope>NUCLEOTIDE SEQUENCE [LARGE SCALE MRNA] (ISOFORM 2)</scope>
    <source>
        <tissue>Lymph</tissue>
    </source>
</reference>
<reference key="7">
    <citation type="journal article" date="2000" name="Genomics">
        <title>Human EVI9, a homologue of the mouse myeloid leukemia gene, is expressed in the hematopoietic progenitors and down-regulated during myeloid differentiation of HL60 cells.</title>
        <authorList>
            <person name="Saiki Y."/>
            <person name="Yamazaki Y."/>
            <person name="Yoshida M."/>
            <person name="Katoh O."/>
            <person name="Nakamura T."/>
        </authorList>
    </citation>
    <scope>NUCLEOTIDE SEQUENCE [MRNA] OF 2-744 (ISOFORM 1)</scope>
    <scope>SUBCELLULAR LOCATION</scope>
    <scope>TISSUE SPECIFICITY</scope>
    <source>
        <tissue>Fetal brain</tissue>
    </source>
</reference>
<reference key="8">
    <citation type="journal article" date="2004" name="Nat. Genet.">
        <title>Complete sequencing and characterization of 21,243 full-length human cDNAs.</title>
        <authorList>
            <person name="Ota T."/>
            <person name="Suzuki Y."/>
            <person name="Nishikawa T."/>
            <person name="Otsuki T."/>
            <person name="Sugiyama T."/>
            <person name="Irie R."/>
            <person name="Wakamatsu A."/>
            <person name="Hayashi K."/>
            <person name="Sato H."/>
            <person name="Nagai K."/>
            <person name="Kimura K."/>
            <person name="Makita H."/>
            <person name="Sekine M."/>
            <person name="Obayashi M."/>
            <person name="Nishi T."/>
            <person name="Shibahara T."/>
            <person name="Tanaka T."/>
            <person name="Ishii S."/>
            <person name="Yamamoto J."/>
            <person name="Saito K."/>
            <person name="Kawai Y."/>
            <person name="Isono Y."/>
            <person name="Nakamura Y."/>
            <person name="Nagahari K."/>
            <person name="Murakami K."/>
            <person name="Yasuda T."/>
            <person name="Iwayanagi T."/>
            <person name="Wagatsuma M."/>
            <person name="Shiratori A."/>
            <person name="Sudo H."/>
            <person name="Hosoiri T."/>
            <person name="Kaku Y."/>
            <person name="Kodaira H."/>
            <person name="Kondo H."/>
            <person name="Sugawara M."/>
            <person name="Takahashi M."/>
            <person name="Kanda K."/>
            <person name="Yokoi T."/>
            <person name="Furuya T."/>
            <person name="Kikkawa E."/>
            <person name="Omura Y."/>
            <person name="Abe K."/>
            <person name="Kamihara K."/>
            <person name="Katsuta N."/>
            <person name="Sato K."/>
            <person name="Tanikawa M."/>
            <person name="Yamazaki M."/>
            <person name="Ninomiya K."/>
            <person name="Ishibashi T."/>
            <person name="Yamashita H."/>
            <person name="Murakawa K."/>
            <person name="Fujimori K."/>
            <person name="Tanai H."/>
            <person name="Kimata M."/>
            <person name="Watanabe M."/>
            <person name="Hiraoka S."/>
            <person name="Chiba Y."/>
            <person name="Ishida S."/>
            <person name="Ono Y."/>
            <person name="Takiguchi S."/>
            <person name="Watanabe S."/>
            <person name="Yosida M."/>
            <person name="Hotuta T."/>
            <person name="Kusano J."/>
            <person name="Kanehori K."/>
            <person name="Takahashi-Fujii A."/>
            <person name="Hara H."/>
            <person name="Tanase T.-O."/>
            <person name="Nomura Y."/>
            <person name="Togiya S."/>
            <person name="Komai F."/>
            <person name="Hara R."/>
            <person name="Takeuchi K."/>
            <person name="Arita M."/>
            <person name="Imose N."/>
            <person name="Musashino K."/>
            <person name="Yuuki H."/>
            <person name="Oshima A."/>
            <person name="Sasaki N."/>
            <person name="Aotsuka S."/>
            <person name="Yoshikawa Y."/>
            <person name="Matsunawa H."/>
            <person name="Ichihara T."/>
            <person name="Shiohata N."/>
            <person name="Sano S."/>
            <person name="Moriya S."/>
            <person name="Momiyama H."/>
            <person name="Satoh N."/>
            <person name="Takami S."/>
            <person name="Terashima Y."/>
            <person name="Suzuki O."/>
            <person name="Nakagawa S."/>
            <person name="Senoh A."/>
            <person name="Mizoguchi H."/>
            <person name="Goto Y."/>
            <person name="Shimizu F."/>
            <person name="Wakebe H."/>
            <person name="Hishigaki H."/>
            <person name="Watanabe T."/>
            <person name="Sugiyama A."/>
            <person name="Takemoto M."/>
            <person name="Kawakami B."/>
            <person name="Yamazaki M."/>
            <person name="Watanabe K."/>
            <person name="Kumagai A."/>
            <person name="Itakura S."/>
            <person name="Fukuzumi Y."/>
            <person name="Fujimori Y."/>
            <person name="Komiyama M."/>
            <person name="Tashiro H."/>
            <person name="Tanigami A."/>
            <person name="Fujiwara T."/>
            <person name="Ono T."/>
            <person name="Yamada K."/>
            <person name="Fujii Y."/>
            <person name="Ozaki K."/>
            <person name="Hirao M."/>
            <person name="Ohmori Y."/>
            <person name="Kawabata A."/>
            <person name="Hikiji T."/>
            <person name="Kobatake N."/>
            <person name="Inagaki H."/>
            <person name="Ikema Y."/>
            <person name="Okamoto S."/>
            <person name="Okitani R."/>
            <person name="Kawakami T."/>
            <person name="Noguchi S."/>
            <person name="Itoh T."/>
            <person name="Shigeta K."/>
            <person name="Senba T."/>
            <person name="Matsumura K."/>
            <person name="Nakajima Y."/>
            <person name="Mizuno T."/>
            <person name="Morinaga M."/>
            <person name="Sasaki M."/>
            <person name="Togashi T."/>
            <person name="Oyama M."/>
            <person name="Hata H."/>
            <person name="Watanabe M."/>
            <person name="Komatsu T."/>
            <person name="Mizushima-Sugano J."/>
            <person name="Satoh T."/>
            <person name="Shirai Y."/>
            <person name="Takahashi Y."/>
            <person name="Nakagawa K."/>
            <person name="Okumura K."/>
            <person name="Nagase T."/>
            <person name="Nomura N."/>
            <person name="Kikuchi H."/>
            <person name="Masuho Y."/>
            <person name="Yamashita R."/>
            <person name="Nakai K."/>
            <person name="Yada T."/>
            <person name="Nakamura Y."/>
            <person name="Ohara O."/>
            <person name="Isogai T."/>
            <person name="Sugano S."/>
        </authorList>
    </citation>
    <scope>NUCLEOTIDE SEQUENCE [LARGE SCALE MRNA] OF 636-835</scope>
    <source>
        <tissue>Embryo</tissue>
    </source>
</reference>
<reference key="9">
    <citation type="journal article" date="2006" name="Mol. Cancer">
        <title>Functional studies of BCL11A: characterization of the conserved BCL11A-XL splice variant and its interaction with BCL6 in nuclear paraspeckles of germinal center B cells.</title>
        <authorList>
            <person name="Liu H."/>
            <person name="Ippolito G.C."/>
            <person name="Wall J.K."/>
            <person name="Niu T."/>
            <person name="Probst L."/>
            <person name="Lee B.S."/>
            <person name="Pulford K."/>
            <person name="Banham A.H."/>
            <person name="Stockwin L."/>
            <person name="Shaffer A.L."/>
            <person name="Staudt L.M."/>
            <person name="Das C."/>
            <person name="Dyer M.J."/>
            <person name="Tucker P.W."/>
        </authorList>
    </citation>
    <scope>FUNCTION</scope>
    <scope>ALTERNATIVE SPLICING (ISOFORMS 1; 2; 3 AND 7)</scope>
</reference>
<reference key="10">
    <citation type="journal article" date="2009" name="Anal. Chem.">
        <title>Lys-N and trypsin cover complementary parts of the phosphoproteome in a refined SCX-based approach.</title>
        <authorList>
            <person name="Gauci S."/>
            <person name="Helbig A.O."/>
            <person name="Slijper M."/>
            <person name="Krijgsveld J."/>
            <person name="Heck A.J."/>
            <person name="Mohammed S."/>
        </authorList>
    </citation>
    <scope>IDENTIFICATION BY MASS SPECTROMETRY [LARGE SCALE ANALYSIS]</scope>
</reference>
<reference key="11">
    <citation type="journal article" date="2009" name="Mol. Cell. Proteomics">
        <title>Large-scale proteomics analysis of the human kinome.</title>
        <authorList>
            <person name="Oppermann F.S."/>
            <person name="Gnad F."/>
            <person name="Olsen J.V."/>
            <person name="Hornberger R."/>
            <person name="Greff Z."/>
            <person name="Keri G."/>
            <person name="Mann M."/>
            <person name="Daub H."/>
        </authorList>
    </citation>
    <scope>PHOSPHORYLATION [LARGE SCALE ANALYSIS] AT SER-205 AND SER-608</scope>
    <scope>IDENTIFICATION BY MASS SPECTROMETRY [LARGE SCALE ANALYSIS]</scope>
</reference>
<reference key="12">
    <citation type="journal article" date="2009" name="Sci. Signal.">
        <title>Quantitative phosphoproteomic analysis of T cell receptor signaling reveals system-wide modulation of protein-protein interactions.</title>
        <authorList>
            <person name="Mayya V."/>
            <person name="Lundgren D.H."/>
            <person name="Hwang S.-I."/>
            <person name="Rezaul K."/>
            <person name="Wu L."/>
            <person name="Eng J.K."/>
            <person name="Rodionov V."/>
            <person name="Han D.K."/>
        </authorList>
    </citation>
    <scope>PHOSPHORYLATION [LARGE SCALE ANALYSIS] AT SER-332; SER-625; SER-630 AND THR-701</scope>
    <scope>IDENTIFICATION BY MASS SPECTROMETRY [LARGE SCALE ANALYSIS]</scope>
    <source>
        <tissue>Leukemic T-cell</tissue>
    </source>
</reference>
<reference key="13">
    <citation type="journal article" date="2015" name="Curr. Opin. Genet. Dev.">
        <title>Hemoglobin switching's surprise: the versatile transcription factor BCL11A is a master repressor of fetal hemoglobin.</title>
        <authorList>
            <person name="Bauer D.E."/>
            <person name="Orkin S.H."/>
        </authorList>
    </citation>
    <scope>REVIEW ON FUNCTION</scope>
</reference>
<reference key="14">
    <citation type="journal article" date="2015" name="Mol. Cell. Proteomics">
        <title>System-wide analysis of SUMOylation dynamics in response to replication stress reveals novel small ubiquitin-like modified target proteins and acceptor lysines relevant for genome stability.</title>
        <authorList>
            <person name="Xiao Z."/>
            <person name="Chang J.G."/>
            <person name="Hendriks I.A."/>
            <person name="Sigurdsson J.O."/>
            <person name="Olsen J.V."/>
            <person name="Vertegaal A.C."/>
        </authorList>
    </citation>
    <scope>SUMOYLATION [LARGE SCALE ANALYSIS] AT LYS-123 AND LYS-833</scope>
    <scope>IDENTIFICATION BY MASS SPECTROMETRY [LARGE SCALE ANALYSIS]</scope>
</reference>
<reference key="15">
    <citation type="journal article" date="2017" name="Nat. Struct. Mol. Biol.">
        <title>Site-specific mapping of the human SUMO proteome reveals co-modification with phosphorylation.</title>
        <authorList>
            <person name="Hendriks I.A."/>
            <person name="Lyon D."/>
            <person name="Young C."/>
            <person name="Jensen L.J."/>
            <person name="Vertegaal A.C."/>
            <person name="Nielsen M.L."/>
        </authorList>
    </citation>
    <scope>SUMOYLATION [LARGE SCALE ANALYSIS] AT LYS-123; LYS-164; LYS-620 AND LYS-833</scope>
    <scope>SUMOYLATION [LARGE SCALE ANALYSIS] AT LYS-123 (ISOFORM 6)</scope>
    <scope>IDENTIFICATION BY MASS SPECTROMETRY [LARGE SCALE ANALYSIS]</scope>
</reference>
<reference key="16">
    <citation type="journal article" date="2006" name="Science">
        <title>The consensus coding sequences of human breast and colorectal cancers.</title>
        <authorList>
            <person name="Sjoeblom T."/>
            <person name="Jones S."/>
            <person name="Wood L.D."/>
            <person name="Parsons D.W."/>
            <person name="Lin J."/>
            <person name="Barber T.D."/>
            <person name="Mandelker D."/>
            <person name="Leary R.J."/>
            <person name="Ptak J."/>
            <person name="Silliman N."/>
            <person name="Szabo S."/>
            <person name="Buckhaults P."/>
            <person name="Farrell C."/>
            <person name="Meeh P."/>
            <person name="Markowitz S.D."/>
            <person name="Willis J."/>
            <person name="Dawson D."/>
            <person name="Willson J.K.V."/>
            <person name="Gazdar A.F."/>
            <person name="Hartigan J."/>
            <person name="Wu L."/>
            <person name="Liu C."/>
            <person name="Parmigiani G."/>
            <person name="Park B.H."/>
            <person name="Bachman K.E."/>
            <person name="Papadopoulos N."/>
            <person name="Vogelstein B."/>
            <person name="Kinzler K.W."/>
            <person name="Velculescu V.E."/>
        </authorList>
    </citation>
    <scope>VARIANT [LARGE SCALE ANALYSIS] PHE-142</scope>
</reference>
<reference key="17">
    <citation type="journal article" date="2007" name="Nat. Genet.">
        <title>A QTL influencing F cell production maps to a gene encoding a zinc-finger protein on chromosome 2p15.</title>
        <authorList>
            <person name="Menzel S."/>
            <person name="Garner C."/>
            <person name="Gut I."/>
            <person name="Matsuda F."/>
            <person name="Yamaguchi M."/>
            <person name="Heath S."/>
            <person name="Foglio M."/>
            <person name="Zelenika D."/>
            <person name="Boland A."/>
            <person name="Rooks H."/>
            <person name="Best S."/>
            <person name="Spector T.D."/>
            <person name="Farrall M."/>
            <person name="Lathrop M."/>
            <person name="Thein S.L."/>
        </authorList>
    </citation>
    <scope>POLYMORPHISM</scope>
    <scope>ASSOCIATION WITH FETAL HEMOGLOBIN QUANTITATIVE TRAIT LOCUS 5</scope>
</reference>
<reference key="18">
    <citation type="journal article" date="2013" name="Nat. Genet.">
        <title>Proteomic and bioinformatic analysis of mammalian SWI/SNF complexes identifies extensive roles in human malignancy.</title>
        <authorList>
            <person name="Kadoch C."/>
            <person name="Hargreaves D.C."/>
            <person name="Hodges C."/>
            <person name="Elias L."/>
            <person name="Ho L."/>
            <person name="Ranish J."/>
            <person name="Crabtree G.R."/>
        </authorList>
    </citation>
    <scope>FUNCTION</scope>
</reference>
<reference key="19">
    <citation type="journal article" date="2016" name="Am. J. Hum. Genet.">
        <title>BCL11A haploinsufficiency causes an intellectual disability syndrome and dysregulates transcription.</title>
        <authorList>
            <consortium name="DDD Study"/>
            <person name="Dias C."/>
            <person name="Estruch S.B."/>
            <person name="Grmaham S.A."/>
            <person name="McRae J."/>
            <person name="Sawiak S.J."/>
            <person name="Hurst J.A."/>
            <person name="Joss S.K."/>
            <person name="Holder S.E."/>
            <person name="Morton J.E."/>
            <person name="Turner C."/>
            <person name="Thevenon J."/>
            <person name="Mellul K."/>
            <person name="Sanchez-Andrade G."/>
            <person name="Ibarra-Soria X."/>
            <person name="Deriziotis P."/>
            <person name="Santos R.F."/>
            <person name="Lee S.C."/>
            <person name="Faivre L."/>
            <person name="Kleefstra T."/>
            <person name="Liu P."/>
            <person name="Hurles M.E."/>
            <person name="Fisher S.E."/>
            <person name="Logan D.W."/>
        </authorList>
    </citation>
    <scope>INVOLVEMENT IN IDPFH</scope>
    <scope>VARIANTS IDPFH PRO-47; PHE-48 AND GLN-66</scope>
    <scope>CHARACTERIZATION OF VARIANTS IDPFH PRO-47; PHE-48 AND GLN-66</scope>
    <scope>FUNCTION</scope>
    <scope>SUBCELLULAR LOCATION</scope>
</reference>
<reference key="20">
    <citation type="journal article" date="2018" name="Cell">
        <title>Direct Promoter Repression by BCL11A Controls the Fetal to Adult Hemoglobin Switch.</title>
        <authorList>
            <person name="Liu N."/>
            <person name="Hargreaves V.V."/>
            <person name="Zhu Q."/>
            <person name="Kurland J.V."/>
            <person name="Hong J."/>
            <person name="Kim W."/>
            <person name="Sher F."/>
            <person name="Macias-Trevino C."/>
            <person name="Rogers J.M."/>
            <person name="Kurita R."/>
            <person name="Nakamura Y."/>
            <person name="Yuan G.C."/>
            <person name="Bauer D.E."/>
            <person name="Xu J."/>
            <person name="Bulyk M.L."/>
            <person name="Orkin S.H."/>
        </authorList>
    </citation>
    <scope>FUNCTION</scope>
    <scope>SUBCELLULAR LOCATION</scope>
    <scope>DOMAIN</scope>
</reference>
<reference key="21">
    <citation type="journal article" date="2018" name="Sci. Rep.">
        <title>Functional characterization of TBR1 variants in neurodevelopmental disorder.</title>
        <authorList>
            <person name="den Hoed J."/>
            <person name="Sollis E."/>
            <person name="Venselaar H."/>
            <person name="Estruch S.B."/>
            <person name="Deriziotis P."/>
            <person name="Fisher S.E."/>
        </authorList>
    </citation>
    <scope>INTERACTION WITH TBR1</scope>
    <scope>CHARACTERIZATION OF VARIANTS IDPFH PRO-47; PHE-48 AND GLN-66</scope>
    <scope>DOMAIN</scope>
</reference>
<reference evidence="24 25 26" key="22">
    <citation type="journal article" date="2024" name="Structure">
        <title>Structural insights into the DNA-binding mechanism of BCL11A: The integral role of ZnF6.</title>
        <authorList>
            <person name="Viennet T."/>
            <person name="Yin M."/>
            <person name="Jayaraj A."/>
            <person name="Kim W."/>
            <person name="Sun Z.J."/>
            <person name="Fujiwara Y."/>
            <person name="Zhang K."/>
            <person name="Seruggia D."/>
            <person name="Seo H.S."/>
            <person name="Dhe-Paganon S."/>
            <person name="Orkin S.H."/>
            <person name="Arthanari H."/>
        </authorList>
    </citation>
    <scope>X-RAY CRYSTALLOGRAPHY (1.83 ANGSTROMS) OF 730-835 IN COMPLEX WITH ZN(2+) AND DNA</scope>
    <scope>STRUCTURE BY NMR OF 737-835</scope>
    <scope>FUNCTION</scope>
    <scope>INTERACTION WITH DNA</scope>
    <scope>ZINC-BINDING</scope>
</reference>
<reference evidence="27" key="23">
    <citation type="journal article" date="2024" name="Science">
        <title>A tetramer of BCL11A is required for stable protein production and fetal hemoglobin silencing.</title>
        <authorList>
            <person name="Zheng G."/>
            <person name="Yin M."/>
            <person name="Mehta S."/>
            <person name="Chu I.T."/>
            <person name="Wang S."/>
            <person name="Alshaye A."/>
            <person name="Drainville K."/>
            <person name="Buyanbat A."/>
            <person name="Bienfait F."/>
            <person name="Tenglin K."/>
            <person name="Zhu Q."/>
            <person name="Orkin S.H."/>
        </authorList>
    </citation>
    <scope>X-RAY CRYSTALLOGRAPHY (2.56 ANGSTROMS) OF 45-71 IN COMPLEX WITH ZN(2+)</scope>
    <scope>FUNCTION</scope>
    <scope>SUBUNIT</scope>
    <scope>INTERACTION WITH MTA2</scope>
    <scope>ZINC-BINDING</scope>
    <scope>MUTAGENESIS OF LEU-46; LEU-57; ILE-60; LEU-61 AND PHE-63</scope>
</reference>